<reference key="1">
    <citation type="journal article" date="2002" name="Proc. Natl. Acad. Sci. U.S.A.">
        <title>Genome sequence of a serotype M3 strain of group A Streptococcus: phage-encoded toxins, the high-virulence phenotype, and clone emergence.</title>
        <authorList>
            <person name="Beres S.B."/>
            <person name="Sylva G.L."/>
            <person name="Barbian K.D."/>
            <person name="Lei B."/>
            <person name="Hoff J.S."/>
            <person name="Mammarella N.D."/>
            <person name="Liu M.-Y."/>
            <person name="Smoot J.C."/>
            <person name="Porcella S.F."/>
            <person name="Parkins L.D."/>
            <person name="Campbell D.S."/>
            <person name="Smith T.M."/>
            <person name="McCormick J.K."/>
            <person name="Leung D.Y.M."/>
            <person name="Schlievert P.M."/>
            <person name="Musser J.M."/>
        </authorList>
    </citation>
    <scope>NUCLEOTIDE SEQUENCE [LARGE SCALE GENOMIC DNA]</scope>
    <source>
        <strain>ATCC BAA-595 / MGAS315</strain>
    </source>
</reference>
<sequence>MAKEKYDRSKPHVNIGTIGHVDHGKTTLTAAITTVLARRLPSSVNQPKDYASIDAAPEERERGITINTAHVEYETATRHYAHIDAPGHADYVKNMITGAAQMDGAILVVASTDGPMPQTREHILLSRQVGVKHLIVFMNKVDLVDDEELLELVEMEIRDLLSEYDFPGDDLPVIQGSALKALEGDTKFEDIIMELMDTVDSYIPEPERDTDKPLLLPVEDVFSITGRGTVASGRIDRGTVRVNDEIEIVGIKEETKKAVVTGVEMFRKQLDEGLAGDNVGILLRGVQRDEIERGQVIAKPGSINPHTKFKGEVYILSKDEGGRHTPFFNNYRPQFYFRTTDVTGSIELPAGTEMVMPGDNVTINVELIHPIAVEQGTTFSIREGGRTVGSGIVSEIEA</sequence>
<comment type="function">
    <text evidence="2">GTP hydrolase that promotes the GTP-dependent binding of aminoacyl-tRNA to the A-site of ribosomes during protein biosynthesis.</text>
</comment>
<comment type="catalytic activity">
    <reaction evidence="2">
        <text>GTP + H2O = GDP + phosphate + H(+)</text>
        <dbReference type="Rhea" id="RHEA:19669"/>
        <dbReference type="ChEBI" id="CHEBI:15377"/>
        <dbReference type="ChEBI" id="CHEBI:15378"/>
        <dbReference type="ChEBI" id="CHEBI:37565"/>
        <dbReference type="ChEBI" id="CHEBI:43474"/>
        <dbReference type="ChEBI" id="CHEBI:58189"/>
        <dbReference type="EC" id="3.6.5.3"/>
    </reaction>
    <physiologicalReaction direction="left-to-right" evidence="2">
        <dbReference type="Rhea" id="RHEA:19670"/>
    </physiologicalReaction>
</comment>
<comment type="subunit">
    <text evidence="2">Monomer.</text>
</comment>
<comment type="subcellular location">
    <subcellularLocation>
        <location evidence="2">Cytoplasm</location>
    </subcellularLocation>
</comment>
<comment type="similarity">
    <text evidence="2">Belongs to the TRAFAC class translation factor GTPase superfamily. Classic translation factor GTPase family. EF-Tu/EF-1A subfamily.</text>
</comment>
<gene>
    <name evidence="2" type="primary">tuf</name>
    <name type="synonym">tufA</name>
    <name type="ordered locus">SpyM3_0432</name>
</gene>
<protein>
    <recommendedName>
        <fullName evidence="2">Elongation factor Tu</fullName>
        <shortName evidence="2">EF-Tu</shortName>
        <ecNumber evidence="2">3.6.5.3</ecNumber>
    </recommendedName>
</protein>
<accession>P0DA82</accession>
<accession>Q8K872</accession>
<evidence type="ECO:0000250" key="1"/>
<evidence type="ECO:0000255" key="2">
    <source>
        <dbReference type="HAMAP-Rule" id="MF_00118"/>
    </source>
</evidence>
<dbReference type="EC" id="3.6.5.3" evidence="2"/>
<dbReference type="EMBL" id="AE014074">
    <property type="protein sequence ID" value="AAM79039.1"/>
    <property type="molecule type" value="Genomic_DNA"/>
</dbReference>
<dbReference type="RefSeq" id="WP_002990541.1">
    <property type="nucleotide sequence ID" value="NC_004070.1"/>
</dbReference>
<dbReference type="SMR" id="P0DA82"/>
<dbReference type="KEGG" id="spg:SpyM3_0432"/>
<dbReference type="HOGENOM" id="CLU_007265_0_1_9"/>
<dbReference type="Proteomes" id="UP000000564">
    <property type="component" value="Chromosome"/>
</dbReference>
<dbReference type="GO" id="GO:0005829">
    <property type="term" value="C:cytosol"/>
    <property type="evidence" value="ECO:0007669"/>
    <property type="project" value="TreeGrafter"/>
</dbReference>
<dbReference type="GO" id="GO:0005525">
    <property type="term" value="F:GTP binding"/>
    <property type="evidence" value="ECO:0007669"/>
    <property type="project" value="UniProtKB-UniRule"/>
</dbReference>
<dbReference type="GO" id="GO:0003924">
    <property type="term" value="F:GTPase activity"/>
    <property type="evidence" value="ECO:0007669"/>
    <property type="project" value="InterPro"/>
</dbReference>
<dbReference type="GO" id="GO:0003746">
    <property type="term" value="F:translation elongation factor activity"/>
    <property type="evidence" value="ECO:0007669"/>
    <property type="project" value="UniProtKB-UniRule"/>
</dbReference>
<dbReference type="CDD" id="cd01884">
    <property type="entry name" value="EF_Tu"/>
    <property type="match status" value="1"/>
</dbReference>
<dbReference type="CDD" id="cd03697">
    <property type="entry name" value="EFTU_II"/>
    <property type="match status" value="1"/>
</dbReference>
<dbReference type="CDD" id="cd03707">
    <property type="entry name" value="EFTU_III"/>
    <property type="match status" value="1"/>
</dbReference>
<dbReference type="FunFam" id="2.40.30.10:FF:000001">
    <property type="entry name" value="Elongation factor Tu"/>
    <property type="match status" value="1"/>
</dbReference>
<dbReference type="FunFam" id="3.40.50.300:FF:000003">
    <property type="entry name" value="Elongation factor Tu"/>
    <property type="match status" value="1"/>
</dbReference>
<dbReference type="Gene3D" id="3.40.50.300">
    <property type="entry name" value="P-loop containing nucleotide triphosphate hydrolases"/>
    <property type="match status" value="1"/>
</dbReference>
<dbReference type="Gene3D" id="2.40.30.10">
    <property type="entry name" value="Translation factors"/>
    <property type="match status" value="2"/>
</dbReference>
<dbReference type="HAMAP" id="MF_00118_B">
    <property type="entry name" value="EF_Tu_B"/>
    <property type="match status" value="1"/>
</dbReference>
<dbReference type="InterPro" id="IPR041709">
    <property type="entry name" value="EF-Tu_GTP-bd"/>
</dbReference>
<dbReference type="InterPro" id="IPR050055">
    <property type="entry name" value="EF-Tu_GTPase"/>
</dbReference>
<dbReference type="InterPro" id="IPR004161">
    <property type="entry name" value="EFTu-like_2"/>
</dbReference>
<dbReference type="InterPro" id="IPR033720">
    <property type="entry name" value="EFTU_2"/>
</dbReference>
<dbReference type="InterPro" id="IPR031157">
    <property type="entry name" value="G_TR_CS"/>
</dbReference>
<dbReference type="InterPro" id="IPR027417">
    <property type="entry name" value="P-loop_NTPase"/>
</dbReference>
<dbReference type="InterPro" id="IPR005225">
    <property type="entry name" value="Small_GTP-bd"/>
</dbReference>
<dbReference type="InterPro" id="IPR000795">
    <property type="entry name" value="T_Tr_GTP-bd_dom"/>
</dbReference>
<dbReference type="InterPro" id="IPR009000">
    <property type="entry name" value="Transl_B-barrel_sf"/>
</dbReference>
<dbReference type="InterPro" id="IPR009001">
    <property type="entry name" value="Transl_elong_EF1A/Init_IF2_C"/>
</dbReference>
<dbReference type="InterPro" id="IPR004541">
    <property type="entry name" value="Transl_elong_EFTu/EF1A_bac/org"/>
</dbReference>
<dbReference type="InterPro" id="IPR004160">
    <property type="entry name" value="Transl_elong_EFTu/EF1A_C"/>
</dbReference>
<dbReference type="NCBIfam" id="TIGR00485">
    <property type="entry name" value="EF-Tu"/>
    <property type="match status" value="1"/>
</dbReference>
<dbReference type="NCBIfam" id="NF000766">
    <property type="entry name" value="PRK00049.1"/>
    <property type="match status" value="1"/>
</dbReference>
<dbReference type="NCBIfam" id="NF009372">
    <property type="entry name" value="PRK12735.1"/>
    <property type="match status" value="1"/>
</dbReference>
<dbReference type="NCBIfam" id="NF009373">
    <property type="entry name" value="PRK12736.1"/>
    <property type="match status" value="1"/>
</dbReference>
<dbReference type="NCBIfam" id="TIGR00231">
    <property type="entry name" value="small_GTP"/>
    <property type="match status" value="1"/>
</dbReference>
<dbReference type="PANTHER" id="PTHR43721:SF22">
    <property type="entry name" value="ELONGATION FACTOR TU, MITOCHONDRIAL"/>
    <property type="match status" value="1"/>
</dbReference>
<dbReference type="PANTHER" id="PTHR43721">
    <property type="entry name" value="ELONGATION FACTOR TU-RELATED"/>
    <property type="match status" value="1"/>
</dbReference>
<dbReference type="Pfam" id="PF00009">
    <property type="entry name" value="GTP_EFTU"/>
    <property type="match status" value="1"/>
</dbReference>
<dbReference type="Pfam" id="PF03144">
    <property type="entry name" value="GTP_EFTU_D2"/>
    <property type="match status" value="1"/>
</dbReference>
<dbReference type="Pfam" id="PF03143">
    <property type="entry name" value="GTP_EFTU_D3"/>
    <property type="match status" value="1"/>
</dbReference>
<dbReference type="PRINTS" id="PR00315">
    <property type="entry name" value="ELONGATNFCT"/>
</dbReference>
<dbReference type="SUPFAM" id="SSF50465">
    <property type="entry name" value="EF-Tu/eEF-1alpha/eIF2-gamma C-terminal domain"/>
    <property type="match status" value="1"/>
</dbReference>
<dbReference type="SUPFAM" id="SSF52540">
    <property type="entry name" value="P-loop containing nucleoside triphosphate hydrolases"/>
    <property type="match status" value="1"/>
</dbReference>
<dbReference type="SUPFAM" id="SSF50447">
    <property type="entry name" value="Translation proteins"/>
    <property type="match status" value="1"/>
</dbReference>
<dbReference type="PROSITE" id="PS00301">
    <property type="entry name" value="G_TR_1"/>
    <property type="match status" value="1"/>
</dbReference>
<dbReference type="PROSITE" id="PS51722">
    <property type="entry name" value="G_TR_2"/>
    <property type="match status" value="1"/>
</dbReference>
<name>EFTU_STRP3</name>
<proteinExistence type="inferred from homology"/>
<feature type="chain" id="PRO_0000091410" description="Elongation factor Tu">
    <location>
        <begin position="1"/>
        <end position="398"/>
    </location>
</feature>
<feature type="domain" description="tr-type G">
    <location>
        <begin position="10"/>
        <end position="207"/>
    </location>
</feature>
<feature type="region of interest" description="G1" evidence="1">
    <location>
        <begin position="19"/>
        <end position="26"/>
    </location>
</feature>
<feature type="region of interest" description="G2" evidence="1">
    <location>
        <begin position="63"/>
        <end position="67"/>
    </location>
</feature>
<feature type="region of interest" description="G3" evidence="1">
    <location>
        <begin position="84"/>
        <end position="87"/>
    </location>
</feature>
<feature type="region of interest" description="G4" evidence="1">
    <location>
        <begin position="139"/>
        <end position="142"/>
    </location>
</feature>
<feature type="region of interest" description="G5" evidence="1">
    <location>
        <begin position="177"/>
        <end position="179"/>
    </location>
</feature>
<feature type="binding site" evidence="2">
    <location>
        <begin position="19"/>
        <end position="26"/>
    </location>
    <ligand>
        <name>GTP</name>
        <dbReference type="ChEBI" id="CHEBI:37565"/>
    </ligand>
</feature>
<feature type="binding site" evidence="2">
    <location>
        <position position="26"/>
    </location>
    <ligand>
        <name>Mg(2+)</name>
        <dbReference type="ChEBI" id="CHEBI:18420"/>
    </ligand>
</feature>
<feature type="binding site" evidence="2">
    <location>
        <begin position="84"/>
        <end position="88"/>
    </location>
    <ligand>
        <name>GTP</name>
        <dbReference type="ChEBI" id="CHEBI:37565"/>
    </ligand>
</feature>
<feature type="binding site" evidence="2">
    <location>
        <begin position="139"/>
        <end position="142"/>
    </location>
    <ligand>
        <name>GTP</name>
        <dbReference type="ChEBI" id="CHEBI:37565"/>
    </ligand>
</feature>
<organism>
    <name type="scientific">Streptococcus pyogenes serotype M3 (strain ATCC BAA-595 / MGAS315)</name>
    <dbReference type="NCBI Taxonomy" id="198466"/>
    <lineage>
        <taxon>Bacteria</taxon>
        <taxon>Bacillati</taxon>
        <taxon>Bacillota</taxon>
        <taxon>Bacilli</taxon>
        <taxon>Lactobacillales</taxon>
        <taxon>Streptococcaceae</taxon>
        <taxon>Streptococcus</taxon>
    </lineage>
</organism>
<keyword id="KW-0963">Cytoplasm</keyword>
<keyword id="KW-0251">Elongation factor</keyword>
<keyword id="KW-0342">GTP-binding</keyword>
<keyword id="KW-0378">Hydrolase</keyword>
<keyword id="KW-0460">Magnesium</keyword>
<keyword id="KW-0479">Metal-binding</keyword>
<keyword id="KW-0547">Nucleotide-binding</keyword>
<keyword id="KW-0648">Protein biosynthesis</keyword>